<comment type="function">
    <text evidence="1">Plays a role in the assembly/stability of the mitochondrial membrane ATP synthase (F(1)F(0) ATP synthase or Complex V).</text>
</comment>
<comment type="subcellular location">
    <subcellularLocation>
        <location evidence="1">Mitochondrion</location>
    </subcellularLocation>
</comment>
<comment type="similarity">
    <text evidence="3">Belongs to the FMC1 family.</text>
</comment>
<proteinExistence type="inferred from homology"/>
<dbReference type="EMBL" id="BC157136">
    <property type="protein sequence ID" value="AAI57137.1"/>
    <property type="molecule type" value="mRNA"/>
</dbReference>
<dbReference type="RefSeq" id="NP_001107336.1">
    <property type="nucleotide sequence ID" value="NM_001113864.1"/>
</dbReference>
<dbReference type="SMR" id="A9UL63"/>
<dbReference type="FunCoup" id="A9UL63">
    <property type="interactions" value="880"/>
</dbReference>
<dbReference type="STRING" id="8364.ENSXETP00000009601"/>
<dbReference type="PaxDb" id="8364-ENSXETP00000060131"/>
<dbReference type="GeneID" id="100135156"/>
<dbReference type="KEGG" id="xtr:100135156"/>
<dbReference type="AGR" id="Xenbase:XB-GENE-966028"/>
<dbReference type="CTD" id="154791"/>
<dbReference type="eggNOG" id="ENOG502S1MM">
    <property type="taxonomic scope" value="Eukaryota"/>
</dbReference>
<dbReference type="HOGENOM" id="CLU_159000_0_0_1"/>
<dbReference type="InParanoid" id="A9UL63"/>
<dbReference type="OMA" id="HHASLTY"/>
<dbReference type="OrthoDB" id="551431at2759"/>
<dbReference type="PhylomeDB" id="A9UL63"/>
<dbReference type="TreeFam" id="TF321497"/>
<dbReference type="Proteomes" id="UP000008143">
    <property type="component" value="Chromosome 4"/>
</dbReference>
<dbReference type="Bgee" id="ENSXETG00000032301">
    <property type="expression patterns" value="Expressed in 2-cell stage embryo and 13 other cell types or tissues"/>
</dbReference>
<dbReference type="GO" id="GO:0005739">
    <property type="term" value="C:mitochondrion"/>
    <property type="evidence" value="ECO:0000250"/>
    <property type="project" value="UniProtKB"/>
</dbReference>
<dbReference type="GO" id="GO:0033615">
    <property type="term" value="P:mitochondrial proton-transporting ATP synthase complex assembly"/>
    <property type="evidence" value="ECO:0000250"/>
    <property type="project" value="UniProtKB"/>
</dbReference>
<dbReference type="CDD" id="cd20271">
    <property type="entry name" value="Complex1_LYR_FMC1"/>
    <property type="match status" value="1"/>
</dbReference>
<dbReference type="InterPro" id="IPR037667">
    <property type="entry name" value="FMC1_homologue"/>
</dbReference>
<dbReference type="PANTHER" id="PTHR31716">
    <property type="entry name" value="PROTEIN FMC1 HOMOLOG"/>
    <property type="match status" value="1"/>
</dbReference>
<dbReference type="PANTHER" id="PTHR31716:SF1">
    <property type="entry name" value="PROTEIN FMC1 HOMOLOG"/>
    <property type="match status" value="1"/>
</dbReference>
<reference key="1">
    <citation type="submission" date="2007-12" db="EMBL/GenBank/DDBJ databases">
        <authorList>
            <consortium name="NIH - Xenopus Gene Collection (XGC) project"/>
        </authorList>
    </citation>
    <scope>NUCLEOTIDE SEQUENCE [LARGE SCALE MRNA]</scope>
    <source>
        <tissue>Embryo</tissue>
    </source>
</reference>
<evidence type="ECO:0000250" key="1">
    <source>
        <dbReference type="UniProtKB" id="Q96HJ9"/>
    </source>
</evidence>
<evidence type="ECO:0000256" key="2">
    <source>
        <dbReference type="SAM" id="MobiDB-lite"/>
    </source>
</evidence>
<evidence type="ECO:0000305" key="3"/>
<organism>
    <name type="scientific">Xenopus tropicalis</name>
    <name type="common">Western clawed frog</name>
    <name type="synonym">Silurana tropicalis</name>
    <dbReference type="NCBI Taxonomy" id="8364"/>
    <lineage>
        <taxon>Eukaryota</taxon>
        <taxon>Metazoa</taxon>
        <taxon>Chordata</taxon>
        <taxon>Craniata</taxon>
        <taxon>Vertebrata</taxon>
        <taxon>Euteleostomi</taxon>
        <taxon>Amphibia</taxon>
        <taxon>Batrachia</taxon>
        <taxon>Anura</taxon>
        <taxon>Pipoidea</taxon>
        <taxon>Pipidae</taxon>
        <taxon>Xenopodinae</taxon>
        <taxon>Xenopus</taxon>
        <taxon>Silurana</taxon>
    </lineage>
</organism>
<accession>A9UL63</accession>
<sequence length="110" mass="12812">MAALGSPLRTFHGLLRELRYMNGVTRYRDTAAYKYIREQFRRNQVTEEKLCRAQQELHFQASTYLCLLHSVRNHDMLHQEYHAKGERSPEQVAGLVGLKLPKQPGGKGWE</sequence>
<keyword id="KW-0496">Mitochondrion</keyword>
<keyword id="KW-1185">Reference proteome</keyword>
<feature type="chain" id="PRO_0000328783" description="Protein FMC1 homolog">
    <location>
        <begin position="1"/>
        <end position="110"/>
    </location>
</feature>
<feature type="region of interest" description="Disordered" evidence="2">
    <location>
        <begin position="88"/>
        <end position="110"/>
    </location>
</feature>
<feature type="compositionally biased region" description="Low complexity" evidence="2">
    <location>
        <begin position="94"/>
        <end position="104"/>
    </location>
</feature>
<protein>
    <recommendedName>
        <fullName>Protein FMC1 homolog</fullName>
    </recommendedName>
</protein>
<gene>
    <name type="primary">fmc1</name>
</gene>
<name>FMC1_XENTR</name>